<keyword id="KW-0687">Ribonucleoprotein</keyword>
<keyword id="KW-0689">Ribosomal protein</keyword>
<name>RL17_HAEIE</name>
<evidence type="ECO:0000255" key="1">
    <source>
        <dbReference type="HAMAP-Rule" id="MF_01368"/>
    </source>
</evidence>
<evidence type="ECO:0000305" key="2"/>
<feature type="chain" id="PRO_1000055837" description="Large ribosomal subunit protein bL17">
    <location>
        <begin position="1"/>
        <end position="128"/>
    </location>
</feature>
<dbReference type="EMBL" id="CP000671">
    <property type="protein sequence ID" value="ABQ98922.1"/>
    <property type="molecule type" value="Genomic_DNA"/>
</dbReference>
<dbReference type="SMR" id="A5UDS1"/>
<dbReference type="KEGG" id="hip:CGSHiEE_08045"/>
<dbReference type="HOGENOM" id="CLU_074407_2_0_6"/>
<dbReference type="GO" id="GO:0022625">
    <property type="term" value="C:cytosolic large ribosomal subunit"/>
    <property type="evidence" value="ECO:0007669"/>
    <property type="project" value="TreeGrafter"/>
</dbReference>
<dbReference type="GO" id="GO:0003735">
    <property type="term" value="F:structural constituent of ribosome"/>
    <property type="evidence" value="ECO:0007669"/>
    <property type="project" value="InterPro"/>
</dbReference>
<dbReference type="GO" id="GO:0006412">
    <property type="term" value="P:translation"/>
    <property type="evidence" value="ECO:0007669"/>
    <property type="project" value="UniProtKB-UniRule"/>
</dbReference>
<dbReference type="FunFam" id="3.90.1030.10:FF:000001">
    <property type="entry name" value="50S ribosomal protein L17"/>
    <property type="match status" value="1"/>
</dbReference>
<dbReference type="Gene3D" id="3.90.1030.10">
    <property type="entry name" value="Ribosomal protein L17"/>
    <property type="match status" value="1"/>
</dbReference>
<dbReference type="HAMAP" id="MF_01368">
    <property type="entry name" value="Ribosomal_bL17"/>
    <property type="match status" value="1"/>
</dbReference>
<dbReference type="InterPro" id="IPR000456">
    <property type="entry name" value="Ribosomal_bL17"/>
</dbReference>
<dbReference type="InterPro" id="IPR047859">
    <property type="entry name" value="Ribosomal_bL17_CS"/>
</dbReference>
<dbReference type="InterPro" id="IPR036373">
    <property type="entry name" value="Ribosomal_bL17_sf"/>
</dbReference>
<dbReference type="NCBIfam" id="TIGR00059">
    <property type="entry name" value="L17"/>
    <property type="match status" value="1"/>
</dbReference>
<dbReference type="PANTHER" id="PTHR14413:SF16">
    <property type="entry name" value="LARGE RIBOSOMAL SUBUNIT PROTEIN BL17M"/>
    <property type="match status" value="1"/>
</dbReference>
<dbReference type="PANTHER" id="PTHR14413">
    <property type="entry name" value="RIBOSOMAL PROTEIN L17"/>
    <property type="match status" value="1"/>
</dbReference>
<dbReference type="Pfam" id="PF01196">
    <property type="entry name" value="Ribosomal_L17"/>
    <property type="match status" value="1"/>
</dbReference>
<dbReference type="SUPFAM" id="SSF64263">
    <property type="entry name" value="Prokaryotic ribosomal protein L17"/>
    <property type="match status" value="1"/>
</dbReference>
<dbReference type="PROSITE" id="PS01167">
    <property type="entry name" value="RIBOSOMAL_L17"/>
    <property type="match status" value="1"/>
</dbReference>
<accession>A5UDS1</accession>
<gene>
    <name evidence="1" type="primary">rplQ</name>
    <name type="ordered locus">CGSHiEE_08045</name>
</gene>
<protein>
    <recommendedName>
        <fullName evidence="1">Large ribosomal subunit protein bL17</fullName>
    </recommendedName>
    <alternativeName>
        <fullName evidence="2">50S ribosomal protein L17</fullName>
    </alternativeName>
</protein>
<reference key="1">
    <citation type="journal article" date="2007" name="Genome Biol.">
        <title>Characterization and modeling of the Haemophilus influenzae core and supragenomes based on the complete genomic sequences of Rd and 12 clinical nontypeable strains.</title>
        <authorList>
            <person name="Hogg J.S."/>
            <person name="Hu F.Z."/>
            <person name="Janto B."/>
            <person name="Boissy R."/>
            <person name="Hayes J."/>
            <person name="Keefe R."/>
            <person name="Post J.C."/>
            <person name="Ehrlich G.D."/>
        </authorList>
    </citation>
    <scope>NUCLEOTIDE SEQUENCE [LARGE SCALE GENOMIC DNA]</scope>
    <source>
        <strain>PittEE</strain>
    </source>
</reference>
<organism>
    <name type="scientific">Haemophilus influenzae (strain PittEE)</name>
    <dbReference type="NCBI Taxonomy" id="374930"/>
    <lineage>
        <taxon>Bacteria</taxon>
        <taxon>Pseudomonadati</taxon>
        <taxon>Pseudomonadota</taxon>
        <taxon>Gammaproteobacteria</taxon>
        <taxon>Pasteurellales</taxon>
        <taxon>Pasteurellaceae</taxon>
        <taxon>Haemophilus</taxon>
    </lineage>
</organism>
<sequence>MRHRKSGRQLNRNSSHRQAMFRNLASALVSHEIIKTTLPKAKELRRVVEPLITLAKVDSVANRRLAFARTRNVETVAKLFNELGPRFAQRAGGYTRILKCGFRAGDNAPMAYIELVDRPEVAEATTEE</sequence>
<comment type="subunit">
    <text evidence="1">Part of the 50S ribosomal subunit. Contacts protein L32.</text>
</comment>
<comment type="similarity">
    <text evidence="1">Belongs to the bacterial ribosomal protein bL17 family.</text>
</comment>
<proteinExistence type="inferred from homology"/>